<proteinExistence type="evidence at protein level"/>
<name>Y3295_ARATH</name>
<organism>
    <name type="scientific">Arabidopsis thaliana</name>
    <name type="common">Mouse-ear cress</name>
    <dbReference type="NCBI Taxonomy" id="3702"/>
    <lineage>
        <taxon>Eukaryota</taxon>
        <taxon>Viridiplantae</taxon>
        <taxon>Streptophyta</taxon>
        <taxon>Embryophyta</taxon>
        <taxon>Tracheophyta</taxon>
        <taxon>Spermatophyta</taxon>
        <taxon>Magnoliopsida</taxon>
        <taxon>eudicotyledons</taxon>
        <taxon>Gunneridae</taxon>
        <taxon>Pentapetalae</taxon>
        <taxon>rosids</taxon>
        <taxon>malvids</taxon>
        <taxon>Brassicales</taxon>
        <taxon>Brassicaceae</taxon>
        <taxon>Camelineae</taxon>
        <taxon>Arabidopsis</taxon>
    </lineage>
</organism>
<keyword id="KW-0007">Acetylation</keyword>
<keyword id="KW-0129">CBS domain</keyword>
<keyword id="KW-0472">Membrane</keyword>
<keyword id="KW-1185">Reference proteome</keyword>
<keyword id="KW-0677">Repeat</keyword>
<keyword id="KW-0812">Transmembrane</keyword>
<keyword id="KW-1133">Transmembrane helix</keyword>
<comment type="subcellular location">
    <subcellularLocation>
        <location evidence="5">Membrane</location>
        <topology evidence="5">Single-pass membrane protein</topology>
    </subcellularLocation>
</comment>
<comment type="sequence caution" evidence="5">
    <conflict type="erroneous initiation">
        <sequence resource="EMBL-CDS" id="AAM91587"/>
    </conflict>
    <text>Truncated N-terminus.</text>
</comment>
<gene>
    <name type="primary">CBSCBSPB3</name>
    <name type="ordered locus">At3g52950</name>
    <name type="ORF">F8J2_120</name>
</gene>
<dbReference type="EMBL" id="AL132969">
    <property type="protein sequence ID" value="CAB86899.1"/>
    <property type="molecule type" value="Genomic_DNA"/>
</dbReference>
<dbReference type="EMBL" id="CP002686">
    <property type="protein sequence ID" value="AEE79016.1"/>
    <property type="molecule type" value="Genomic_DNA"/>
</dbReference>
<dbReference type="EMBL" id="CP002686">
    <property type="protein sequence ID" value="AEE79017.1"/>
    <property type="molecule type" value="Genomic_DNA"/>
</dbReference>
<dbReference type="EMBL" id="AY128384">
    <property type="protein sequence ID" value="AAM91587.1"/>
    <property type="status" value="ALT_INIT"/>
    <property type="molecule type" value="mRNA"/>
</dbReference>
<dbReference type="EMBL" id="BT000120">
    <property type="protein sequence ID" value="AAN15439.1"/>
    <property type="molecule type" value="mRNA"/>
</dbReference>
<dbReference type="PIR" id="T47552">
    <property type="entry name" value="T47552"/>
</dbReference>
<dbReference type="RefSeq" id="NP_001190074.1">
    <property type="nucleotide sequence ID" value="NM_001203145.1"/>
</dbReference>
<dbReference type="RefSeq" id="NP_190863.3">
    <property type="nucleotide sequence ID" value="NM_115155.5"/>
</dbReference>
<dbReference type="SMR" id="Q9LF97"/>
<dbReference type="FunCoup" id="Q9LF97">
    <property type="interactions" value="395"/>
</dbReference>
<dbReference type="IntAct" id="Q9LF97">
    <property type="interactions" value="2"/>
</dbReference>
<dbReference type="STRING" id="3702.Q9LF97"/>
<dbReference type="iPTMnet" id="Q9LF97"/>
<dbReference type="PaxDb" id="3702-AT3G52950.1"/>
<dbReference type="ProteomicsDB" id="234607"/>
<dbReference type="EnsemblPlants" id="AT3G52950.1">
    <property type="protein sequence ID" value="AT3G52950.1"/>
    <property type="gene ID" value="AT3G52950"/>
</dbReference>
<dbReference type="EnsemblPlants" id="AT3G52950.2">
    <property type="protein sequence ID" value="AT3G52950.2"/>
    <property type="gene ID" value="AT3G52950"/>
</dbReference>
<dbReference type="GeneID" id="824461"/>
<dbReference type="Gramene" id="AT3G52950.1">
    <property type="protein sequence ID" value="AT3G52950.1"/>
    <property type="gene ID" value="AT3G52950"/>
</dbReference>
<dbReference type="Gramene" id="AT3G52950.2">
    <property type="protein sequence ID" value="AT3G52950.2"/>
    <property type="gene ID" value="AT3G52950"/>
</dbReference>
<dbReference type="KEGG" id="ath:AT3G52950"/>
<dbReference type="Araport" id="AT3G52950"/>
<dbReference type="TAIR" id="AT3G52950"/>
<dbReference type="eggNOG" id="ENOG502QVK2">
    <property type="taxonomic scope" value="Eukaryota"/>
</dbReference>
<dbReference type="HOGENOM" id="CLU_009026_3_0_1"/>
<dbReference type="InParanoid" id="Q9LF97"/>
<dbReference type="OMA" id="FPDSSQH"/>
<dbReference type="OrthoDB" id="418595at2759"/>
<dbReference type="PhylomeDB" id="Q9LF97"/>
<dbReference type="PRO" id="PR:Q9LF97"/>
<dbReference type="Proteomes" id="UP000006548">
    <property type="component" value="Chromosome 3"/>
</dbReference>
<dbReference type="ExpressionAtlas" id="Q9LF97">
    <property type="expression patterns" value="baseline and differential"/>
</dbReference>
<dbReference type="GO" id="GO:0016020">
    <property type="term" value="C:membrane"/>
    <property type="evidence" value="ECO:0007669"/>
    <property type="project" value="UniProtKB-SubCell"/>
</dbReference>
<dbReference type="CDD" id="cd17781">
    <property type="entry name" value="CBS_pair_MUG70_1"/>
    <property type="match status" value="1"/>
</dbReference>
<dbReference type="CDD" id="cd17782">
    <property type="entry name" value="CBS_pair_MUG70_2"/>
    <property type="match status" value="1"/>
</dbReference>
<dbReference type="CDD" id="cd06409">
    <property type="entry name" value="PB1_MUG70"/>
    <property type="match status" value="1"/>
</dbReference>
<dbReference type="Gene3D" id="3.10.580.10">
    <property type="entry name" value="CBS-domain"/>
    <property type="match status" value="2"/>
</dbReference>
<dbReference type="InterPro" id="IPR000644">
    <property type="entry name" value="CBS_dom"/>
</dbReference>
<dbReference type="InterPro" id="IPR046342">
    <property type="entry name" value="CBS_dom_sf"/>
</dbReference>
<dbReference type="InterPro" id="IPR051462">
    <property type="entry name" value="CBS_domain-containing"/>
</dbReference>
<dbReference type="InterPro" id="IPR053793">
    <property type="entry name" value="PB1-like"/>
</dbReference>
<dbReference type="InterPro" id="IPR000270">
    <property type="entry name" value="PB1_dom"/>
</dbReference>
<dbReference type="PANTHER" id="PTHR48108">
    <property type="entry name" value="CBS DOMAIN-CONTAINING PROTEIN CBSX2, CHLOROPLASTIC"/>
    <property type="match status" value="1"/>
</dbReference>
<dbReference type="PANTHER" id="PTHR48108:SF26">
    <property type="entry name" value="CBS DOMAIN-CONTAINING PROTEIN DDB_G0289609"/>
    <property type="match status" value="1"/>
</dbReference>
<dbReference type="Pfam" id="PF00571">
    <property type="entry name" value="CBS"/>
    <property type="match status" value="4"/>
</dbReference>
<dbReference type="Pfam" id="PF00564">
    <property type="entry name" value="PB1"/>
    <property type="match status" value="1"/>
</dbReference>
<dbReference type="SMART" id="SM00116">
    <property type="entry name" value="CBS"/>
    <property type="match status" value="4"/>
</dbReference>
<dbReference type="SMART" id="SM00666">
    <property type="entry name" value="PB1"/>
    <property type="match status" value="1"/>
</dbReference>
<dbReference type="SUPFAM" id="SSF54277">
    <property type="entry name" value="CAD &amp; PB1 domains"/>
    <property type="match status" value="1"/>
</dbReference>
<dbReference type="SUPFAM" id="SSF54631">
    <property type="entry name" value="CBS-domain pair"/>
    <property type="match status" value="2"/>
</dbReference>
<dbReference type="PROSITE" id="PS51371">
    <property type="entry name" value="CBS"/>
    <property type="match status" value="4"/>
</dbReference>
<dbReference type="PROSITE" id="PS51745">
    <property type="entry name" value="PB1"/>
    <property type="match status" value="1"/>
</dbReference>
<evidence type="ECO:0000255" key="1"/>
<evidence type="ECO:0000255" key="2">
    <source>
        <dbReference type="PROSITE-ProRule" id="PRU00703"/>
    </source>
</evidence>
<evidence type="ECO:0000255" key="3">
    <source>
        <dbReference type="PROSITE-ProRule" id="PRU01081"/>
    </source>
</evidence>
<evidence type="ECO:0000256" key="4">
    <source>
        <dbReference type="SAM" id="MobiDB-lite"/>
    </source>
</evidence>
<evidence type="ECO:0000305" key="5"/>
<evidence type="ECO:0007744" key="6">
    <source>
    </source>
</evidence>
<reference key="1">
    <citation type="journal article" date="2000" name="Nature">
        <title>Sequence and analysis of chromosome 3 of the plant Arabidopsis thaliana.</title>
        <authorList>
            <person name="Salanoubat M."/>
            <person name="Lemcke K."/>
            <person name="Rieger M."/>
            <person name="Ansorge W."/>
            <person name="Unseld M."/>
            <person name="Fartmann B."/>
            <person name="Valle G."/>
            <person name="Bloecker H."/>
            <person name="Perez-Alonso M."/>
            <person name="Obermaier B."/>
            <person name="Delseny M."/>
            <person name="Boutry M."/>
            <person name="Grivell L.A."/>
            <person name="Mache R."/>
            <person name="Puigdomenech P."/>
            <person name="De Simone V."/>
            <person name="Choisne N."/>
            <person name="Artiguenave F."/>
            <person name="Robert C."/>
            <person name="Brottier P."/>
            <person name="Wincker P."/>
            <person name="Cattolico L."/>
            <person name="Weissenbach J."/>
            <person name="Saurin W."/>
            <person name="Quetier F."/>
            <person name="Schaefer M."/>
            <person name="Mueller-Auer S."/>
            <person name="Gabel C."/>
            <person name="Fuchs M."/>
            <person name="Benes V."/>
            <person name="Wurmbach E."/>
            <person name="Drzonek H."/>
            <person name="Erfle H."/>
            <person name="Jordan N."/>
            <person name="Bangert S."/>
            <person name="Wiedelmann R."/>
            <person name="Kranz H."/>
            <person name="Voss H."/>
            <person name="Holland R."/>
            <person name="Brandt P."/>
            <person name="Nyakatura G."/>
            <person name="Vezzi A."/>
            <person name="D'Angelo M."/>
            <person name="Pallavicini A."/>
            <person name="Toppo S."/>
            <person name="Simionati B."/>
            <person name="Conrad A."/>
            <person name="Hornischer K."/>
            <person name="Kauer G."/>
            <person name="Loehnert T.-H."/>
            <person name="Nordsiek G."/>
            <person name="Reichelt J."/>
            <person name="Scharfe M."/>
            <person name="Schoen O."/>
            <person name="Bargues M."/>
            <person name="Terol J."/>
            <person name="Climent J."/>
            <person name="Navarro P."/>
            <person name="Collado C."/>
            <person name="Perez-Perez A."/>
            <person name="Ottenwaelder B."/>
            <person name="Duchemin D."/>
            <person name="Cooke R."/>
            <person name="Laudie M."/>
            <person name="Berger-Llauro C."/>
            <person name="Purnelle B."/>
            <person name="Masuy D."/>
            <person name="de Haan M."/>
            <person name="Maarse A.C."/>
            <person name="Alcaraz J.-P."/>
            <person name="Cottet A."/>
            <person name="Casacuberta E."/>
            <person name="Monfort A."/>
            <person name="Argiriou A."/>
            <person name="Flores M."/>
            <person name="Liguori R."/>
            <person name="Vitale D."/>
            <person name="Mannhaupt G."/>
            <person name="Haase D."/>
            <person name="Schoof H."/>
            <person name="Rudd S."/>
            <person name="Zaccaria P."/>
            <person name="Mewes H.-W."/>
            <person name="Mayer K.F.X."/>
            <person name="Kaul S."/>
            <person name="Town C.D."/>
            <person name="Koo H.L."/>
            <person name="Tallon L.J."/>
            <person name="Jenkins J."/>
            <person name="Rooney T."/>
            <person name="Rizzo M."/>
            <person name="Walts A."/>
            <person name="Utterback T."/>
            <person name="Fujii C.Y."/>
            <person name="Shea T.P."/>
            <person name="Creasy T.H."/>
            <person name="Haas B."/>
            <person name="Maiti R."/>
            <person name="Wu D."/>
            <person name="Peterson J."/>
            <person name="Van Aken S."/>
            <person name="Pai G."/>
            <person name="Militscher J."/>
            <person name="Sellers P."/>
            <person name="Gill J.E."/>
            <person name="Feldblyum T.V."/>
            <person name="Preuss D."/>
            <person name="Lin X."/>
            <person name="Nierman W.C."/>
            <person name="Salzberg S.L."/>
            <person name="White O."/>
            <person name="Venter J.C."/>
            <person name="Fraser C.M."/>
            <person name="Kaneko T."/>
            <person name="Nakamura Y."/>
            <person name="Sato S."/>
            <person name="Kato T."/>
            <person name="Asamizu E."/>
            <person name="Sasamoto S."/>
            <person name="Kimura T."/>
            <person name="Idesawa K."/>
            <person name="Kawashima K."/>
            <person name="Kishida Y."/>
            <person name="Kiyokawa C."/>
            <person name="Kohara M."/>
            <person name="Matsumoto M."/>
            <person name="Matsuno A."/>
            <person name="Muraki A."/>
            <person name="Nakayama S."/>
            <person name="Nakazaki N."/>
            <person name="Shinpo S."/>
            <person name="Takeuchi C."/>
            <person name="Wada T."/>
            <person name="Watanabe A."/>
            <person name="Yamada M."/>
            <person name="Yasuda M."/>
            <person name="Tabata S."/>
        </authorList>
    </citation>
    <scope>NUCLEOTIDE SEQUENCE [LARGE SCALE GENOMIC DNA]</scope>
    <source>
        <strain>cv. Columbia</strain>
    </source>
</reference>
<reference key="2">
    <citation type="journal article" date="2017" name="Plant J.">
        <title>Araport11: a complete reannotation of the Arabidopsis thaliana reference genome.</title>
        <authorList>
            <person name="Cheng C.Y."/>
            <person name="Krishnakumar V."/>
            <person name="Chan A.P."/>
            <person name="Thibaud-Nissen F."/>
            <person name="Schobel S."/>
            <person name="Town C.D."/>
        </authorList>
    </citation>
    <scope>GENOME REANNOTATION</scope>
    <source>
        <strain>cv. Columbia</strain>
    </source>
</reference>
<reference key="3">
    <citation type="journal article" date="2003" name="Science">
        <title>Empirical analysis of transcriptional activity in the Arabidopsis genome.</title>
        <authorList>
            <person name="Yamada K."/>
            <person name="Lim J."/>
            <person name="Dale J.M."/>
            <person name="Chen H."/>
            <person name="Shinn P."/>
            <person name="Palm C.J."/>
            <person name="Southwick A.M."/>
            <person name="Wu H.C."/>
            <person name="Kim C.J."/>
            <person name="Nguyen M."/>
            <person name="Pham P.K."/>
            <person name="Cheuk R.F."/>
            <person name="Karlin-Newmann G."/>
            <person name="Liu S.X."/>
            <person name="Lam B."/>
            <person name="Sakano H."/>
            <person name="Wu T."/>
            <person name="Yu G."/>
            <person name="Miranda M."/>
            <person name="Quach H.L."/>
            <person name="Tripp M."/>
            <person name="Chang C.H."/>
            <person name="Lee J.M."/>
            <person name="Toriumi M.J."/>
            <person name="Chan M.M."/>
            <person name="Tang C.C."/>
            <person name="Onodera C.S."/>
            <person name="Deng J.M."/>
            <person name="Akiyama K."/>
            <person name="Ansari Y."/>
            <person name="Arakawa T."/>
            <person name="Banh J."/>
            <person name="Banno F."/>
            <person name="Bowser L."/>
            <person name="Brooks S.Y."/>
            <person name="Carninci P."/>
            <person name="Chao Q."/>
            <person name="Choy N."/>
            <person name="Enju A."/>
            <person name="Goldsmith A.D."/>
            <person name="Gurjal M."/>
            <person name="Hansen N.F."/>
            <person name="Hayashizaki Y."/>
            <person name="Johnson-Hopson C."/>
            <person name="Hsuan V.W."/>
            <person name="Iida K."/>
            <person name="Karnes M."/>
            <person name="Khan S."/>
            <person name="Koesema E."/>
            <person name="Ishida J."/>
            <person name="Jiang P.X."/>
            <person name="Jones T."/>
            <person name="Kawai J."/>
            <person name="Kamiya A."/>
            <person name="Meyers C."/>
            <person name="Nakajima M."/>
            <person name="Narusaka M."/>
            <person name="Seki M."/>
            <person name="Sakurai T."/>
            <person name="Satou M."/>
            <person name="Tamse R."/>
            <person name="Vaysberg M."/>
            <person name="Wallender E.K."/>
            <person name="Wong C."/>
            <person name="Yamamura Y."/>
            <person name="Yuan S."/>
            <person name="Shinozaki K."/>
            <person name="Davis R.W."/>
            <person name="Theologis A."/>
            <person name="Ecker J.R."/>
        </authorList>
    </citation>
    <scope>NUCLEOTIDE SEQUENCE [LARGE SCALE MRNA] OF 84-556</scope>
    <source>
        <strain>cv. Columbia</strain>
    </source>
</reference>
<reference key="4">
    <citation type="journal article" date="2009" name="BMC Genomics">
        <title>Genome wide expression analysis of CBS domain containing proteins in Arabidopsis thaliana (L.) Heynh and Oryza sativa L. reveals their developmental and stress regulation.</title>
        <authorList>
            <person name="Kushwaha H.R."/>
            <person name="Singh A.K."/>
            <person name="Sopory S.K."/>
            <person name="Singla-Pareek S.L."/>
            <person name="Pareek A."/>
        </authorList>
    </citation>
    <scope>GENE FAMILY</scope>
    <scope>NOMENCLATURE</scope>
</reference>
<reference key="5">
    <citation type="journal article" date="2012" name="Mol. Cell. Proteomics">
        <title>Comparative large-scale characterisation of plant vs. mammal proteins reveals similar and idiosyncratic N-alpha acetylation features.</title>
        <authorList>
            <person name="Bienvenut W.V."/>
            <person name="Sumpton D."/>
            <person name="Martinez A."/>
            <person name="Lilla S."/>
            <person name="Espagne C."/>
            <person name="Meinnel T."/>
            <person name="Giglione C."/>
        </authorList>
    </citation>
    <scope>ACETYLATION [LARGE SCALE ANALYSIS] AT SER-2</scope>
    <scope>CLEAVAGE OF INITIATOR METHIONINE [LARGE SCALE ANALYSIS]</scope>
    <scope>IDENTIFICATION BY MASS SPECTROMETRY [LARGE SCALE ANALYSIS]</scope>
</reference>
<accession>Q9LF97</accession>
<accession>Q8L7L7</accession>
<feature type="initiator methionine" description="Removed" evidence="6">
    <location>
        <position position="1"/>
    </location>
</feature>
<feature type="chain" id="PRO_0000412229" description="CBS domain-containing protein CBSCBSPB3">
    <location>
        <begin position="2"/>
        <end position="556"/>
    </location>
</feature>
<feature type="transmembrane region" description="Helical" evidence="1">
    <location>
        <begin position="527"/>
        <end position="549"/>
    </location>
</feature>
<feature type="domain" description="CBS 1" evidence="2">
    <location>
        <begin position="68"/>
        <end position="127"/>
    </location>
</feature>
<feature type="domain" description="CBS 2" evidence="2">
    <location>
        <begin position="134"/>
        <end position="189"/>
    </location>
</feature>
<feature type="domain" description="CBS 3" evidence="2">
    <location>
        <begin position="235"/>
        <end position="294"/>
    </location>
</feature>
<feature type="domain" description="CBS 4" evidence="2">
    <location>
        <begin position="302"/>
        <end position="360"/>
    </location>
</feature>
<feature type="domain" description="PB1" evidence="3">
    <location>
        <begin position="414"/>
        <end position="502"/>
    </location>
</feature>
<feature type="region of interest" description="Disordered" evidence="4">
    <location>
        <begin position="1"/>
        <end position="63"/>
    </location>
</feature>
<feature type="compositionally biased region" description="Polar residues" evidence="4">
    <location>
        <begin position="1"/>
        <end position="20"/>
    </location>
</feature>
<feature type="compositionally biased region" description="Polar residues" evidence="4">
    <location>
        <begin position="30"/>
        <end position="44"/>
    </location>
</feature>
<feature type="modified residue" description="N-acetylserine" evidence="6">
    <location>
        <position position="2"/>
    </location>
</feature>
<sequence>MSTQATGPSSTSGRRSNSTVRRGPPPSKKPVQSENGSVNGNTSKPNSPPPQPQSQAPSNGERTVKKLRLSKALTIPEGTTVFDACRRMAARRVDACLLTDSSALLSGIVTDKDVATRVIAEGLRPDQTLVSKVMTRNPIFVTSDSLALEALQKMVQGKFRHLPVVENGEVIALLDITKCLYDAISRMEKAAEQGSALAAAVEGVEKQWGSGYSAPYAFIETLRERMFKPALSTIITDNSKVALVAPSDPVSVAAKRMRDLRVNSVIISTGNKISGILTSKDILMRVVAQNLSPELTLVEKVMTPNPECASLETTILDALHTMHDGKFLHLPIIDKDGSAAACVDVLQITHAAISMVENSSGAVNDMANTMMQKFWDSALALEPPDDSDTQSEMSAMMHHSDIGKLSSYPSLGLGNSFSFKFEDLKGRVHRFTSGAENLEELMGIVMQRIGSDNNNVEQRPQIIYEDDEGDKVLITSDSDLVGAVTLARSTGQKVLRLHLDFTESTRSLSSETTQLKKGDSRDRGSGWVSWRGGVVVTGAVVLTSIAIVVYLKRSKN</sequence>
<protein>
    <recommendedName>
        <fullName>CBS domain-containing protein CBSCBSPB3</fullName>
    </recommendedName>
</protein>